<comment type="function">
    <text evidence="1">Part of the ABC transporter complex MetNIQ involved in methionine import. Responsible for energy coupling to the transport system.</text>
</comment>
<comment type="catalytic activity">
    <reaction evidence="1">
        <text>L-methionine(out) + ATP + H2O = L-methionine(in) + ADP + phosphate + H(+)</text>
        <dbReference type="Rhea" id="RHEA:29779"/>
        <dbReference type="ChEBI" id="CHEBI:15377"/>
        <dbReference type="ChEBI" id="CHEBI:15378"/>
        <dbReference type="ChEBI" id="CHEBI:30616"/>
        <dbReference type="ChEBI" id="CHEBI:43474"/>
        <dbReference type="ChEBI" id="CHEBI:57844"/>
        <dbReference type="ChEBI" id="CHEBI:456216"/>
        <dbReference type="EC" id="7.4.2.11"/>
    </reaction>
</comment>
<comment type="catalytic activity">
    <reaction evidence="1">
        <text>D-methionine(out) + ATP + H2O = D-methionine(in) + ADP + phosphate + H(+)</text>
        <dbReference type="Rhea" id="RHEA:29767"/>
        <dbReference type="ChEBI" id="CHEBI:15377"/>
        <dbReference type="ChEBI" id="CHEBI:15378"/>
        <dbReference type="ChEBI" id="CHEBI:30616"/>
        <dbReference type="ChEBI" id="CHEBI:43474"/>
        <dbReference type="ChEBI" id="CHEBI:57932"/>
        <dbReference type="ChEBI" id="CHEBI:456216"/>
        <dbReference type="EC" id="7.4.2.11"/>
    </reaction>
</comment>
<comment type="subunit">
    <text evidence="1">The complex is composed of two ATP-binding proteins (MetN), two transmembrane proteins (MetI) and a solute-binding protein (MetQ).</text>
</comment>
<comment type="subcellular location">
    <subcellularLocation>
        <location evidence="1">Cell membrane</location>
        <topology evidence="1">Peripheral membrane protein</topology>
    </subcellularLocation>
</comment>
<comment type="similarity">
    <text evidence="1">Belongs to the ABC transporter superfamily. Methionine importer (TC 3.A.1.24) family.</text>
</comment>
<dbReference type="EC" id="7.4.2.11" evidence="1"/>
<dbReference type="EMBL" id="AP006627">
    <property type="protein sequence ID" value="BAD63092.1"/>
    <property type="molecule type" value="Genomic_DNA"/>
</dbReference>
<dbReference type="RefSeq" id="WP_011245409.1">
    <property type="nucleotide sequence ID" value="NC_006582.1"/>
</dbReference>
<dbReference type="SMR" id="Q5WKL3"/>
<dbReference type="STRING" id="66692.ABC0552"/>
<dbReference type="KEGG" id="bcl:ABC0552"/>
<dbReference type="eggNOG" id="COG1135">
    <property type="taxonomic scope" value="Bacteria"/>
</dbReference>
<dbReference type="HOGENOM" id="CLU_000604_1_3_9"/>
<dbReference type="OrthoDB" id="9802264at2"/>
<dbReference type="Proteomes" id="UP000001168">
    <property type="component" value="Chromosome"/>
</dbReference>
<dbReference type="GO" id="GO:0005886">
    <property type="term" value="C:plasma membrane"/>
    <property type="evidence" value="ECO:0007669"/>
    <property type="project" value="UniProtKB-SubCell"/>
</dbReference>
<dbReference type="GO" id="GO:0033232">
    <property type="term" value="F:ABC-type D-methionine transporter activity"/>
    <property type="evidence" value="ECO:0007669"/>
    <property type="project" value="UniProtKB-EC"/>
</dbReference>
<dbReference type="GO" id="GO:0005524">
    <property type="term" value="F:ATP binding"/>
    <property type="evidence" value="ECO:0007669"/>
    <property type="project" value="UniProtKB-KW"/>
</dbReference>
<dbReference type="GO" id="GO:0016887">
    <property type="term" value="F:ATP hydrolysis activity"/>
    <property type="evidence" value="ECO:0007669"/>
    <property type="project" value="InterPro"/>
</dbReference>
<dbReference type="CDD" id="cd03258">
    <property type="entry name" value="ABC_MetN_methionine_transporter"/>
    <property type="match status" value="1"/>
</dbReference>
<dbReference type="FunFam" id="3.40.50.300:FF:000233">
    <property type="entry name" value="Methionine import ATP-binding protein MetN"/>
    <property type="match status" value="1"/>
</dbReference>
<dbReference type="Gene3D" id="3.30.70.260">
    <property type="match status" value="1"/>
</dbReference>
<dbReference type="Gene3D" id="3.40.50.300">
    <property type="entry name" value="P-loop containing nucleotide triphosphate hydrolases"/>
    <property type="match status" value="1"/>
</dbReference>
<dbReference type="InterPro" id="IPR003593">
    <property type="entry name" value="AAA+_ATPase"/>
</dbReference>
<dbReference type="InterPro" id="IPR003439">
    <property type="entry name" value="ABC_transporter-like_ATP-bd"/>
</dbReference>
<dbReference type="InterPro" id="IPR017871">
    <property type="entry name" value="ABC_transporter-like_CS"/>
</dbReference>
<dbReference type="InterPro" id="IPR045865">
    <property type="entry name" value="ACT-like_dom_sf"/>
</dbReference>
<dbReference type="InterPro" id="IPR041701">
    <property type="entry name" value="MetN_ABC"/>
</dbReference>
<dbReference type="InterPro" id="IPR050086">
    <property type="entry name" value="MetN_ABC_transporter-like"/>
</dbReference>
<dbReference type="InterPro" id="IPR018449">
    <property type="entry name" value="NIL_domain"/>
</dbReference>
<dbReference type="InterPro" id="IPR027417">
    <property type="entry name" value="P-loop_NTPase"/>
</dbReference>
<dbReference type="PANTHER" id="PTHR43166">
    <property type="entry name" value="AMINO ACID IMPORT ATP-BINDING PROTEIN"/>
    <property type="match status" value="1"/>
</dbReference>
<dbReference type="PANTHER" id="PTHR43166:SF30">
    <property type="entry name" value="METHIONINE IMPORT ATP-BINDING PROTEIN METN"/>
    <property type="match status" value="1"/>
</dbReference>
<dbReference type="Pfam" id="PF00005">
    <property type="entry name" value="ABC_tran"/>
    <property type="match status" value="1"/>
</dbReference>
<dbReference type="Pfam" id="PF09383">
    <property type="entry name" value="NIL"/>
    <property type="match status" value="1"/>
</dbReference>
<dbReference type="SMART" id="SM00382">
    <property type="entry name" value="AAA"/>
    <property type="match status" value="1"/>
</dbReference>
<dbReference type="SMART" id="SM00930">
    <property type="entry name" value="NIL"/>
    <property type="match status" value="1"/>
</dbReference>
<dbReference type="SUPFAM" id="SSF55021">
    <property type="entry name" value="ACT-like"/>
    <property type="match status" value="1"/>
</dbReference>
<dbReference type="SUPFAM" id="SSF52540">
    <property type="entry name" value="P-loop containing nucleoside triphosphate hydrolases"/>
    <property type="match status" value="1"/>
</dbReference>
<dbReference type="PROSITE" id="PS00211">
    <property type="entry name" value="ABC_TRANSPORTER_1"/>
    <property type="match status" value="1"/>
</dbReference>
<dbReference type="PROSITE" id="PS50893">
    <property type="entry name" value="ABC_TRANSPORTER_2"/>
    <property type="match status" value="1"/>
</dbReference>
<dbReference type="PROSITE" id="PS51264">
    <property type="entry name" value="METN"/>
    <property type="match status" value="1"/>
</dbReference>
<keyword id="KW-0029">Amino-acid transport</keyword>
<keyword id="KW-0067">ATP-binding</keyword>
<keyword id="KW-1003">Cell membrane</keyword>
<keyword id="KW-0472">Membrane</keyword>
<keyword id="KW-0547">Nucleotide-binding</keyword>
<keyword id="KW-1185">Reference proteome</keyword>
<keyword id="KW-1278">Translocase</keyword>
<keyword id="KW-0813">Transport</keyword>
<protein>
    <recommendedName>
        <fullName evidence="1">Methionine import ATP-binding protein MetN 1</fullName>
        <ecNumber evidence="1">7.4.2.11</ecNumber>
    </recommendedName>
</protein>
<organism>
    <name type="scientific">Shouchella clausii (strain KSM-K16)</name>
    <name type="common">Alkalihalobacillus clausii</name>
    <dbReference type="NCBI Taxonomy" id="66692"/>
    <lineage>
        <taxon>Bacteria</taxon>
        <taxon>Bacillati</taxon>
        <taxon>Bacillota</taxon>
        <taxon>Bacilli</taxon>
        <taxon>Bacillales</taxon>
        <taxon>Bacillaceae</taxon>
        <taxon>Shouchella</taxon>
    </lineage>
</organism>
<proteinExistence type="inferred from homology"/>
<gene>
    <name evidence="1" type="primary">metN1</name>
    <name type="ordered locus">ABC0552</name>
</gene>
<sequence>MIEFKQVTKTFHSGNQTVTALDNVNLHVARGEIYGVIGFSGAGKSTLIRSANLLERPTSGEVLINGVNLATLKSRELQKAKRNIGMIFQHFNLLQSKTVFDNVATPLKLTRTPKADIRKRVTELLSFVGLSDKADNYPEQLSGGQKQRIGIARALATNPEVLLCDEATSALDPDTTSSILHLLKKINIEYNITILMITHEMSVIREICDKVAVMEKGRIIEEGSVLSIFSNPQHPTTEKFVRSIIPTGLPARVKEALQQKEPNRRIYEVTVTGDSSHSDLLRSLIQTFGIEVDILHATMNDIQGTSFGRIYFDLRAEPEILAEASNYLKSHPLQPKEVTGDARVAA</sequence>
<evidence type="ECO:0000255" key="1">
    <source>
        <dbReference type="HAMAP-Rule" id="MF_01719"/>
    </source>
</evidence>
<accession>Q5WKL3</accession>
<reference key="1">
    <citation type="submission" date="2003-10" db="EMBL/GenBank/DDBJ databases">
        <title>The complete genome sequence of the alkaliphilic Bacillus clausii KSM-K16.</title>
        <authorList>
            <person name="Takaki Y."/>
            <person name="Kageyama Y."/>
            <person name="Shimamura S."/>
            <person name="Suzuki H."/>
            <person name="Nishi S."/>
            <person name="Hatada Y."/>
            <person name="Kawai S."/>
            <person name="Ito S."/>
            <person name="Horikoshi K."/>
        </authorList>
    </citation>
    <scope>NUCLEOTIDE SEQUENCE [LARGE SCALE GENOMIC DNA]</scope>
    <source>
        <strain>KSM-K16</strain>
    </source>
</reference>
<feature type="chain" id="PRO_0000270241" description="Methionine import ATP-binding protein MetN 1">
    <location>
        <begin position="1"/>
        <end position="346"/>
    </location>
</feature>
<feature type="domain" description="ABC transporter" evidence="1">
    <location>
        <begin position="2"/>
        <end position="241"/>
    </location>
</feature>
<feature type="binding site" evidence="1">
    <location>
        <begin position="38"/>
        <end position="45"/>
    </location>
    <ligand>
        <name>ATP</name>
        <dbReference type="ChEBI" id="CHEBI:30616"/>
    </ligand>
</feature>
<name>METN1_SHOC1</name>